<accession>A1SNL2</accession>
<protein>
    <recommendedName>
        <fullName evidence="1">Small ribosomal subunit protein uS3</fullName>
    </recommendedName>
    <alternativeName>
        <fullName evidence="3">30S ribosomal protein S3</fullName>
    </alternativeName>
</protein>
<proteinExistence type="inferred from homology"/>
<organism>
    <name type="scientific">Nocardioides sp. (strain ATCC BAA-499 / JS614)</name>
    <dbReference type="NCBI Taxonomy" id="196162"/>
    <lineage>
        <taxon>Bacteria</taxon>
        <taxon>Bacillati</taxon>
        <taxon>Actinomycetota</taxon>
        <taxon>Actinomycetes</taxon>
        <taxon>Propionibacteriales</taxon>
        <taxon>Nocardioidaceae</taxon>
        <taxon>Nocardioides</taxon>
    </lineage>
</organism>
<reference key="1">
    <citation type="submission" date="2006-12" db="EMBL/GenBank/DDBJ databases">
        <title>Complete sequence of chromosome 1 of Nocardioides sp. JS614.</title>
        <authorList>
            <person name="Copeland A."/>
            <person name="Lucas S."/>
            <person name="Lapidus A."/>
            <person name="Barry K."/>
            <person name="Detter J.C."/>
            <person name="Glavina del Rio T."/>
            <person name="Hammon N."/>
            <person name="Israni S."/>
            <person name="Dalin E."/>
            <person name="Tice H."/>
            <person name="Pitluck S."/>
            <person name="Thompson L.S."/>
            <person name="Brettin T."/>
            <person name="Bruce D."/>
            <person name="Han C."/>
            <person name="Tapia R."/>
            <person name="Schmutz J."/>
            <person name="Larimer F."/>
            <person name="Land M."/>
            <person name="Hauser L."/>
            <person name="Kyrpides N."/>
            <person name="Kim E."/>
            <person name="Mattes T."/>
            <person name="Gossett J."/>
            <person name="Richardson P."/>
        </authorList>
    </citation>
    <scope>NUCLEOTIDE SEQUENCE [LARGE SCALE GENOMIC DNA]</scope>
    <source>
        <strain>ATCC BAA-499 / JS614</strain>
    </source>
</reference>
<gene>
    <name evidence="1" type="primary">rpsC</name>
    <name type="ordered locus">Noca_3899</name>
</gene>
<evidence type="ECO:0000255" key="1">
    <source>
        <dbReference type="HAMAP-Rule" id="MF_01309"/>
    </source>
</evidence>
<evidence type="ECO:0000256" key="2">
    <source>
        <dbReference type="SAM" id="MobiDB-lite"/>
    </source>
</evidence>
<evidence type="ECO:0000305" key="3"/>
<sequence length="278" mass="30525">MGQKINPNGFRLGISTDHKSRWYADKLYKSYVGEDVAIRKLLSKGMERAGIAKVEIERTRDRVRVDIHTARPGIVIGRRGAEADRIRGELEKLTGKQVQLNILEVKNPEVDAQLVAQGVAEQLSGRVQFRRAMRKAMQTSMRSGAKGIRIQCSGRLNGAEMSRTEFYREGRVPLHTLRADIDYGFYEARTTFGRIGVKVWIYKGEVAGTRAERQAQAAARAGVPGRGGRPQRGGERPSRGSRGDRPTRADRGGDAPTSEATGAATEQAAPAPAENQEG</sequence>
<feature type="chain" id="PRO_0000293842" description="Small ribosomal subunit protein uS3">
    <location>
        <begin position="1"/>
        <end position="278"/>
    </location>
</feature>
<feature type="domain" description="KH type-2" evidence="1">
    <location>
        <begin position="38"/>
        <end position="106"/>
    </location>
</feature>
<feature type="region of interest" description="Disordered" evidence="2">
    <location>
        <begin position="213"/>
        <end position="278"/>
    </location>
</feature>
<feature type="compositionally biased region" description="Low complexity" evidence="2">
    <location>
        <begin position="214"/>
        <end position="223"/>
    </location>
</feature>
<feature type="compositionally biased region" description="Basic and acidic residues" evidence="2">
    <location>
        <begin position="232"/>
        <end position="253"/>
    </location>
</feature>
<feature type="compositionally biased region" description="Low complexity" evidence="2">
    <location>
        <begin position="259"/>
        <end position="278"/>
    </location>
</feature>
<dbReference type="EMBL" id="CP000509">
    <property type="protein sequence ID" value="ABL83397.1"/>
    <property type="molecule type" value="Genomic_DNA"/>
</dbReference>
<dbReference type="RefSeq" id="WP_011757328.1">
    <property type="nucleotide sequence ID" value="NC_008699.1"/>
</dbReference>
<dbReference type="SMR" id="A1SNL2"/>
<dbReference type="STRING" id="196162.Noca_3899"/>
<dbReference type="KEGG" id="nca:Noca_3899"/>
<dbReference type="eggNOG" id="COG0092">
    <property type="taxonomic scope" value="Bacteria"/>
</dbReference>
<dbReference type="HOGENOM" id="CLU_058591_0_0_11"/>
<dbReference type="OrthoDB" id="9806396at2"/>
<dbReference type="Proteomes" id="UP000000640">
    <property type="component" value="Chromosome"/>
</dbReference>
<dbReference type="GO" id="GO:0022627">
    <property type="term" value="C:cytosolic small ribosomal subunit"/>
    <property type="evidence" value="ECO:0007669"/>
    <property type="project" value="TreeGrafter"/>
</dbReference>
<dbReference type="GO" id="GO:0003729">
    <property type="term" value="F:mRNA binding"/>
    <property type="evidence" value="ECO:0007669"/>
    <property type="project" value="UniProtKB-UniRule"/>
</dbReference>
<dbReference type="GO" id="GO:0019843">
    <property type="term" value="F:rRNA binding"/>
    <property type="evidence" value="ECO:0007669"/>
    <property type="project" value="UniProtKB-UniRule"/>
</dbReference>
<dbReference type="GO" id="GO:0003735">
    <property type="term" value="F:structural constituent of ribosome"/>
    <property type="evidence" value="ECO:0007669"/>
    <property type="project" value="InterPro"/>
</dbReference>
<dbReference type="GO" id="GO:0006412">
    <property type="term" value="P:translation"/>
    <property type="evidence" value="ECO:0007669"/>
    <property type="project" value="UniProtKB-UniRule"/>
</dbReference>
<dbReference type="CDD" id="cd02412">
    <property type="entry name" value="KH-II_30S_S3"/>
    <property type="match status" value="1"/>
</dbReference>
<dbReference type="FunFam" id="3.30.1140.32:FF:000002">
    <property type="entry name" value="30S ribosomal protein S3"/>
    <property type="match status" value="1"/>
</dbReference>
<dbReference type="FunFam" id="3.30.300.20:FF:000001">
    <property type="entry name" value="30S ribosomal protein S3"/>
    <property type="match status" value="1"/>
</dbReference>
<dbReference type="Gene3D" id="3.30.300.20">
    <property type="match status" value="1"/>
</dbReference>
<dbReference type="Gene3D" id="3.30.1140.32">
    <property type="entry name" value="Ribosomal protein S3, C-terminal domain"/>
    <property type="match status" value="1"/>
</dbReference>
<dbReference type="HAMAP" id="MF_01309_B">
    <property type="entry name" value="Ribosomal_uS3_B"/>
    <property type="match status" value="1"/>
</dbReference>
<dbReference type="InterPro" id="IPR004087">
    <property type="entry name" value="KH_dom"/>
</dbReference>
<dbReference type="InterPro" id="IPR015946">
    <property type="entry name" value="KH_dom-like_a/b"/>
</dbReference>
<dbReference type="InterPro" id="IPR004044">
    <property type="entry name" value="KH_dom_type_2"/>
</dbReference>
<dbReference type="InterPro" id="IPR009019">
    <property type="entry name" value="KH_sf_prok-type"/>
</dbReference>
<dbReference type="InterPro" id="IPR036419">
    <property type="entry name" value="Ribosomal_S3_C_sf"/>
</dbReference>
<dbReference type="InterPro" id="IPR005704">
    <property type="entry name" value="Ribosomal_uS3_bac-typ"/>
</dbReference>
<dbReference type="InterPro" id="IPR001351">
    <property type="entry name" value="Ribosomal_uS3_C"/>
</dbReference>
<dbReference type="InterPro" id="IPR018280">
    <property type="entry name" value="Ribosomal_uS3_CS"/>
</dbReference>
<dbReference type="NCBIfam" id="TIGR01009">
    <property type="entry name" value="rpsC_bact"/>
    <property type="match status" value="1"/>
</dbReference>
<dbReference type="PANTHER" id="PTHR11760">
    <property type="entry name" value="30S/40S RIBOSOMAL PROTEIN S3"/>
    <property type="match status" value="1"/>
</dbReference>
<dbReference type="PANTHER" id="PTHR11760:SF19">
    <property type="entry name" value="SMALL RIBOSOMAL SUBUNIT PROTEIN US3C"/>
    <property type="match status" value="1"/>
</dbReference>
<dbReference type="Pfam" id="PF07650">
    <property type="entry name" value="KH_2"/>
    <property type="match status" value="1"/>
</dbReference>
<dbReference type="Pfam" id="PF00189">
    <property type="entry name" value="Ribosomal_S3_C"/>
    <property type="match status" value="1"/>
</dbReference>
<dbReference type="SMART" id="SM00322">
    <property type="entry name" value="KH"/>
    <property type="match status" value="1"/>
</dbReference>
<dbReference type="SUPFAM" id="SSF54814">
    <property type="entry name" value="Prokaryotic type KH domain (KH-domain type II)"/>
    <property type="match status" value="1"/>
</dbReference>
<dbReference type="SUPFAM" id="SSF54821">
    <property type="entry name" value="Ribosomal protein S3 C-terminal domain"/>
    <property type="match status" value="1"/>
</dbReference>
<dbReference type="PROSITE" id="PS50823">
    <property type="entry name" value="KH_TYPE_2"/>
    <property type="match status" value="1"/>
</dbReference>
<dbReference type="PROSITE" id="PS00548">
    <property type="entry name" value="RIBOSOMAL_S3"/>
    <property type="match status" value="1"/>
</dbReference>
<keyword id="KW-1185">Reference proteome</keyword>
<keyword id="KW-0687">Ribonucleoprotein</keyword>
<keyword id="KW-0689">Ribosomal protein</keyword>
<keyword id="KW-0694">RNA-binding</keyword>
<keyword id="KW-0699">rRNA-binding</keyword>
<comment type="function">
    <text evidence="1">Binds the lower part of the 30S subunit head. Binds mRNA in the 70S ribosome, positioning it for translation.</text>
</comment>
<comment type="subunit">
    <text evidence="1">Part of the 30S ribosomal subunit. Forms a tight complex with proteins S10 and S14.</text>
</comment>
<comment type="similarity">
    <text evidence="1">Belongs to the universal ribosomal protein uS3 family.</text>
</comment>
<name>RS3_NOCSJ</name>